<organism>
    <name type="scientific">Mus musculus</name>
    <name type="common">Mouse</name>
    <dbReference type="NCBI Taxonomy" id="10090"/>
    <lineage>
        <taxon>Eukaryota</taxon>
        <taxon>Metazoa</taxon>
        <taxon>Chordata</taxon>
        <taxon>Craniata</taxon>
        <taxon>Vertebrata</taxon>
        <taxon>Euteleostomi</taxon>
        <taxon>Mammalia</taxon>
        <taxon>Eutheria</taxon>
        <taxon>Euarchontoglires</taxon>
        <taxon>Glires</taxon>
        <taxon>Rodentia</taxon>
        <taxon>Myomorpha</taxon>
        <taxon>Muroidea</taxon>
        <taxon>Muridae</taxon>
        <taxon>Murinae</taxon>
        <taxon>Mus</taxon>
        <taxon>Mus</taxon>
    </lineage>
</organism>
<accession>Q3UHG7</accession>
<accession>Q3UT59</accession>
<accession>Q80TI8</accession>
<accession>Q8C6M2</accession>
<name>DEN11_MOUSE</name>
<gene>
    <name type="primary">Dennd11</name>
    <name type="synonym">Kiaa1147</name>
    <name evidence="2" type="synonym">Lchn</name>
</gene>
<protein>
    <recommendedName>
        <fullName evidence="6">DENN domain-containing protein 11</fullName>
        <shortName>DENND11</shortName>
    </recommendedName>
    <alternativeName>
        <fullName>Protein LCHN</fullName>
    </alternativeName>
</protein>
<evidence type="ECO:0000250" key="1">
    <source>
        <dbReference type="UniProtKB" id="A4D1U4"/>
    </source>
</evidence>
<evidence type="ECO:0000250" key="2">
    <source>
        <dbReference type="UniProtKB" id="Q0PGW2"/>
    </source>
</evidence>
<evidence type="ECO:0000255" key="3">
    <source>
        <dbReference type="PROSITE-ProRule" id="PRU00304"/>
    </source>
</evidence>
<evidence type="ECO:0000256" key="4">
    <source>
        <dbReference type="SAM" id="MobiDB-lite"/>
    </source>
</evidence>
<evidence type="ECO:0000303" key="5">
    <source>
    </source>
</evidence>
<evidence type="ECO:0000305" key="6"/>
<proteinExistence type="evidence at transcript level"/>
<comment type="function">
    <text evidence="2 6">Probable guanine nucleotide exchange factor (GEF). May promote the exchange of GDP to GTP, converting inactive GDP-bound small GTPases into their active GTP-bound form (Probable). May play a role in neuritogenesis, as well as in neuronal recovery and/or restructuring in the hippocampus following transient cerebral ischemia (By similarity).</text>
</comment>
<comment type="alternative products">
    <event type="alternative splicing"/>
    <isoform>
        <id>Q3UHG7-1</id>
        <name>1</name>
        <sequence type="displayed"/>
    </isoform>
    <isoform>
        <id>Q3UHG7-2</id>
        <name>2</name>
        <sequence type="described" ref="VSP_030494"/>
    </isoform>
</comment>
<comment type="similarity">
    <text evidence="6">Belongs to the DENND11 family.</text>
</comment>
<reference key="1">
    <citation type="journal article" date="2005" name="Science">
        <title>The transcriptional landscape of the mammalian genome.</title>
        <authorList>
            <person name="Carninci P."/>
            <person name="Kasukawa T."/>
            <person name="Katayama S."/>
            <person name="Gough J."/>
            <person name="Frith M.C."/>
            <person name="Maeda N."/>
            <person name="Oyama R."/>
            <person name="Ravasi T."/>
            <person name="Lenhard B."/>
            <person name="Wells C."/>
            <person name="Kodzius R."/>
            <person name="Shimokawa K."/>
            <person name="Bajic V.B."/>
            <person name="Brenner S.E."/>
            <person name="Batalov S."/>
            <person name="Forrest A.R."/>
            <person name="Zavolan M."/>
            <person name="Davis M.J."/>
            <person name="Wilming L.G."/>
            <person name="Aidinis V."/>
            <person name="Allen J.E."/>
            <person name="Ambesi-Impiombato A."/>
            <person name="Apweiler R."/>
            <person name="Aturaliya R.N."/>
            <person name="Bailey T.L."/>
            <person name="Bansal M."/>
            <person name="Baxter L."/>
            <person name="Beisel K.W."/>
            <person name="Bersano T."/>
            <person name="Bono H."/>
            <person name="Chalk A.M."/>
            <person name="Chiu K.P."/>
            <person name="Choudhary V."/>
            <person name="Christoffels A."/>
            <person name="Clutterbuck D.R."/>
            <person name="Crowe M.L."/>
            <person name="Dalla E."/>
            <person name="Dalrymple B.P."/>
            <person name="de Bono B."/>
            <person name="Della Gatta G."/>
            <person name="di Bernardo D."/>
            <person name="Down T."/>
            <person name="Engstrom P."/>
            <person name="Fagiolini M."/>
            <person name="Faulkner G."/>
            <person name="Fletcher C.F."/>
            <person name="Fukushima T."/>
            <person name="Furuno M."/>
            <person name="Futaki S."/>
            <person name="Gariboldi M."/>
            <person name="Georgii-Hemming P."/>
            <person name="Gingeras T.R."/>
            <person name="Gojobori T."/>
            <person name="Green R.E."/>
            <person name="Gustincich S."/>
            <person name="Harbers M."/>
            <person name="Hayashi Y."/>
            <person name="Hensch T.K."/>
            <person name="Hirokawa N."/>
            <person name="Hill D."/>
            <person name="Huminiecki L."/>
            <person name="Iacono M."/>
            <person name="Ikeo K."/>
            <person name="Iwama A."/>
            <person name="Ishikawa T."/>
            <person name="Jakt M."/>
            <person name="Kanapin A."/>
            <person name="Katoh M."/>
            <person name="Kawasawa Y."/>
            <person name="Kelso J."/>
            <person name="Kitamura H."/>
            <person name="Kitano H."/>
            <person name="Kollias G."/>
            <person name="Krishnan S.P."/>
            <person name="Kruger A."/>
            <person name="Kummerfeld S.K."/>
            <person name="Kurochkin I.V."/>
            <person name="Lareau L.F."/>
            <person name="Lazarevic D."/>
            <person name="Lipovich L."/>
            <person name="Liu J."/>
            <person name="Liuni S."/>
            <person name="McWilliam S."/>
            <person name="Madan Babu M."/>
            <person name="Madera M."/>
            <person name="Marchionni L."/>
            <person name="Matsuda H."/>
            <person name="Matsuzawa S."/>
            <person name="Miki H."/>
            <person name="Mignone F."/>
            <person name="Miyake S."/>
            <person name="Morris K."/>
            <person name="Mottagui-Tabar S."/>
            <person name="Mulder N."/>
            <person name="Nakano N."/>
            <person name="Nakauchi H."/>
            <person name="Ng P."/>
            <person name="Nilsson R."/>
            <person name="Nishiguchi S."/>
            <person name="Nishikawa S."/>
            <person name="Nori F."/>
            <person name="Ohara O."/>
            <person name="Okazaki Y."/>
            <person name="Orlando V."/>
            <person name="Pang K.C."/>
            <person name="Pavan W.J."/>
            <person name="Pavesi G."/>
            <person name="Pesole G."/>
            <person name="Petrovsky N."/>
            <person name="Piazza S."/>
            <person name="Reed J."/>
            <person name="Reid J.F."/>
            <person name="Ring B.Z."/>
            <person name="Ringwald M."/>
            <person name="Rost B."/>
            <person name="Ruan Y."/>
            <person name="Salzberg S.L."/>
            <person name="Sandelin A."/>
            <person name="Schneider C."/>
            <person name="Schoenbach C."/>
            <person name="Sekiguchi K."/>
            <person name="Semple C.A."/>
            <person name="Seno S."/>
            <person name="Sessa L."/>
            <person name="Sheng Y."/>
            <person name="Shibata Y."/>
            <person name="Shimada H."/>
            <person name="Shimada K."/>
            <person name="Silva D."/>
            <person name="Sinclair B."/>
            <person name="Sperling S."/>
            <person name="Stupka E."/>
            <person name="Sugiura K."/>
            <person name="Sultana R."/>
            <person name="Takenaka Y."/>
            <person name="Taki K."/>
            <person name="Tammoja K."/>
            <person name="Tan S.L."/>
            <person name="Tang S."/>
            <person name="Taylor M.S."/>
            <person name="Tegner J."/>
            <person name="Teichmann S.A."/>
            <person name="Ueda H.R."/>
            <person name="van Nimwegen E."/>
            <person name="Verardo R."/>
            <person name="Wei C.L."/>
            <person name="Yagi K."/>
            <person name="Yamanishi H."/>
            <person name="Zabarovsky E."/>
            <person name="Zhu S."/>
            <person name="Zimmer A."/>
            <person name="Hide W."/>
            <person name="Bult C."/>
            <person name="Grimmond S.M."/>
            <person name="Teasdale R.D."/>
            <person name="Liu E.T."/>
            <person name="Brusic V."/>
            <person name="Quackenbush J."/>
            <person name="Wahlestedt C."/>
            <person name="Mattick J.S."/>
            <person name="Hume D.A."/>
            <person name="Kai C."/>
            <person name="Sasaki D."/>
            <person name="Tomaru Y."/>
            <person name="Fukuda S."/>
            <person name="Kanamori-Katayama M."/>
            <person name="Suzuki M."/>
            <person name="Aoki J."/>
            <person name="Arakawa T."/>
            <person name="Iida J."/>
            <person name="Imamura K."/>
            <person name="Itoh M."/>
            <person name="Kato T."/>
            <person name="Kawaji H."/>
            <person name="Kawagashira N."/>
            <person name="Kawashima T."/>
            <person name="Kojima M."/>
            <person name="Kondo S."/>
            <person name="Konno H."/>
            <person name="Nakano K."/>
            <person name="Ninomiya N."/>
            <person name="Nishio T."/>
            <person name="Okada M."/>
            <person name="Plessy C."/>
            <person name="Shibata K."/>
            <person name="Shiraki T."/>
            <person name="Suzuki S."/>
            <person name="Tagami M."/>
            <person name="Waki K."/>
            <person name="Watahiki A."/>
            <person name="Okamura-Oho Y."/>
            <person name="Suzuki H."/>
            <person name="Kawai J."/>
            <person name="Hayashizaki Y."/>
        </authorList>
    </citation>
    <scope>NUCLEOTIDE SEQUENCE [LARGE SCALE MRNA] (ISOFORMS 1 AND 2)</scope>
    <source>
        <strain>C57BL/6J</strain>
        <tissue>Egg</tissue>
        <tissue>Ovary</tissue>
    </source>
</reference>
<reference key="2">
    <citation type="journal article" date="2003" name="DNA Res.">
        <title>Prediction of the coding sequences of mouse homologues of KIAA gene: II. The complete nucleotide sequences of 400 mouse KIAA-homologous cDNAs identified by screening of terminal sequences of cDNA clones randomly sampled from size-fractionated libraries.</title>
        <authorList>
            <person name="Okazaki N."/>
            <person name="Kikuno R."/>
            <person name="Ohara R."/>
            <person name="Inamoto S."/>
            <person name="Aizawa H."/>
            <person name="Yuasa S."/>
            <person name="Nakajima D."/>
            <person name="Nagase T."/>
            <person name="Ohara O."/>
            <person name="Koga H."/>
        </authorList>
    </citation>
    <scope>NUCLEOTIDE SEQUENCE [LARGE SCALE MRNA] OF 99-455 (ISOFORM 1)</scope>
    <source>
        <tissue>Brain</tissue>
    </source>
</reference>
<keyword id="KW-0007">Acetylation</keyword>
<keyword id="KW-0025">Alternative splicing</keyword>
<keyword id="KW-0344">Guanine-nucleotide releasing factor</keyword>
<keyword id="KW-0488">Methylation</keyword>
<keyword id="KW-1185">Reference proteome</keyword>
<dbReference type="EMBL" id="AK122457">
    <property type="protein sequence ID" value="BAC65739.1"/>
    <property type="molecule type" value="mRNA"/>
</dbReference>
<dbReference type="EMBL" id="AK054277">
    <property type="protein sequence ID" value="BAC35714.1"/>
    <property type="molecule type" value="mRNA"/>
</dbReference>
<dbReference type="EMBL" id="AK139744">
    <property type="protein sequence ID" value="BAE24121.1"/>
    <property type="molecule type" value="mRNA"/>
</dbReference>
<dbReference type="EMBL" id="AK147402">
    <property type="protein sequence ID" value="BAE27890.1"/>
    <property type="molecule type" value="mRNA"/>
</dbReference>
<dbReference type="CCDS" id="CCDS90040.1">
    <molecule id="Q3UHG7-1"/>
</dbReference>
<dbReference type="RefSeq" id="NP_001343304.1">
    <molecule id="Q3UHG7-1"/>
    <property type="nucleotide sequence ID" value="NM_001356375.1"/>
</dbReference>
<dbReference type="RefSeq" id="NP_780737.1">
    <property type="nucleotide sequence ID" value="NM_175528.4"/>
</dbReference>
<dbReference type="FunCoup" id="Q3UHG7">
    <property type="interactions" value="427"/>
</dbReference>
<dbReference type="STRING" id="10090.ENSMUSP00000045103"/>
<dbReference type="GlyGen" id="Q3UHG7">
    <property type="glycosylation" value="1 site, 1 O-linked glycan (1 site)"/>
</dbReference>
<dbReference type="iPTMnet" id="Q3UHG7"/>
<dbReference type="PhosphoSitePlus" id="Q3UHG7"/>
<dbReference type="SwissPalm" id="Q3UHG7"/>
<dbReference type="PaxDb" id="10090-ENSMUSP00000045103"/>
<dbReference type="PeptideAtlas" id="Q3UHG7"/>
<dbReference type="ProteomicsDB" id="264728">
    <molecule id="Q3UHG7-1"/>
</dbReference>
<dbReference type="ProteomicsDB" id="264729">
    <molecule id="Q3UHG7-2"/>
</dbReference>
<dbReference type="Pumba" id="Q3UHG7"/>
<dbReference type="Antibodypedia" id="50001">
    <property type="antibodies" value="26 antibodies from 10 providers"/>
</dbReference>
<dbReference type="Ensembl" id="ENSMUST00000039008.10">
    <molecule id="Q3UHG7-2"/>
    <property type="protein sequence ID" value="ENSMUSP00000045103.7"/>
    <property type="gene ID" value="ENSMUSG00000037172.15"/>
</dbReference>
<dbReference type="Ensembl" id="ENSMUST00000101492.10">
    <molecule id="Q3UHG7-1"/>
    <property type="protein sequence ID" value="ENSMUSP00000099031.4"/>
    <property type="gene ID" value="ENSMUSG00000037172.15"/>
</dbReference>
<dbReference type="GeneID" id="243780"/>
<dbReference type="UCSC" id="uc009bmo.1">
    <molecule id="Q3UHG7-1"/>
    <property type="organism name" value="mouse"/>
</dbReference>
<dbReference type="AGR" id="MGI:2444256"/>
<dbReference type="MGI" id="MGI:2444256">
    <property type="gene designation" value="Dennd11"/>
</dbReference>
<dbReference type="VEuPathDB" id="HostDB:ENSMUSG00000037172"/>
<dbReference type="eggNOG" id="KOG4704">
    <property type="taxonomic scope" value="Eukaryota"/>
</dbReference>
<dbReference type="GeneTree" id="ENSGT00590000083189"/>
<dbReference type="HOGENOM" id="CLU_049607_0_0_1"/>
<dbReference type="InParanoid" id="Q3UHG7"/>
<dbReference type="OMA" id="KYMYPEM"/>
<dbReference type="OrthoDB" id="2152680at2759"/>
<dbReference type="PhylomeDB" id="Q3UHG7"/>
<dbReference type="TreeFam" id="TF329174"/>
<dbReference type="BioGRID-ORCS" id="243780">
    <property type="hits" value="2 hits in 60 CRISPR screens"/>
</dbReference>
<dbReference type="ChiTaRS" id="E330009J07Rik">
    <property type="organism name" value="mouse"/>
</dbReference>
<dbReference type="PRO" id="PR:Q3UHG7"/>
<dbReference type="Proteomes" id="UP000000589">
    <property type="component" value="Chromosome 6"/>
</dbReference>
<dbReference type="RNAct" id="Q3UHG7">
    <property type="molecule type" value="protein"/>
</dbReference>
<dbReference type="Bgee" id="ENSMUSG00000037172">
    <property type="expression patterns" value="Expressed in lacrimal gland and 249 other cell types or tissues"/>
</dbReference>
<dbReference type="ExpressionAtlas" id="Q3UHG7">
    <property type="expression patterns" value="baseline and differential"/>
</dbReference>
<dbReference type="GO" id="GO:0005085">
    <property type="term" value="F:guanyl-nucleotide exchange factor activity"/>
    <property type="evidence" value="ECO:0007669"/>
    <property type="project" value="UniProtKB-KW"/>
</dbReference>
<dbReference type="InterPro" id="IPR051731">
    <property type="entry name" value="DENND11/AVL9_GEFs"/>
</dbReference>
<dbReference type="InterPro" id="IPR018626">
    <property type="entry name" value="LCHN/Anr2"/>
</dbReference>
<dbReference type="InterPro" id="IPR037516">
    <property type="entry name" value="Tripartite_DENN"/>
</dbReference>
<dbReference type="PANTHER" id="PTHR31017:SF2">
    <property type="entry name" value="DENN DOMAIN-CONTAINING PROTEIN 11"/>
    <property type="match status" value="1"/>
</dbReference>
<dbReference type="PANTHER" id="PTHR31017">
    <property type="entry name" value="LATE SECRETORY PATHWAY PROTEIN AVL9-RELATED"/>
    <property type="match status" value="1"/>
</dbReference>
<dbReference type="Pfam" id="PF09804">
    <property type="entry name" value="DENND11"/>
    <property type="match status" value="1"/>
</dbReference>
<dbReference type="PROSITE" id="PS50211">
    <property type="entry name" value="DENN"/>
    <property type="match status" value="1"/>
</dbReference>
<sequence>MVEQGDAAPLLRWAEGPAVSVPQDPALQAGGWVRGGSGEGRVAAEAPRRREPDEPAPPEVLLQPGRLELGDVEEDQVVAVFVVTFDPRSGNMVEWCLPQDIDLEGVEFKSMASGSHKVQSDFIYFRKGPFFGLACFANMPVESELERGARMKSVGILSPSYTLLYRYMHFLENQVRHQLEMPGHYSHLAAFYEDKKGVLHAGPGRGGSLPPVYWLPSIHRYMYPEMKITHPAGCMSQFIKFFGEQILILWKFALLRKRILIFSPPPVGVVCYRVYCCCCLANVSLPGIGGTIPESKPFFYVNVADIESLEVEVSYVACTTEKIFEEKRELYDVYVDNQNVKTHHDHLQPLLKINSADREKYRRLNEQRQMLLYSQEVEGDYSPCEEDLFVLFFLEQNNRIFQTLLEVSASQDKTLTAEHARGMGLDPQGDRSFLMDLLEAYGIDVMLVIDNPCCP</sequence>
<feature type="initiator methionine" description="Removed" evidence="1">
    <location>
        <position position="1"/>
    </location>
</feature>
<feature type="chain" id="PRO_0000315222" description="DENN domain-containing protein 11">
    <location>
        <begin position="2"/>
        <end position="455"/>
    </location>
</feature>
<feature type="domain" description="uDENN" evidence="3">
    <location>
        <begin position="15"/>
        <end position="187"/>
    </location>
</feature>
<feature type="domain" description="cDENN" evidence="3">
    <location>
        <begin position="214"/>
        <end position="362"/>
    </location>
</feature>
<feature type="domain" description="dDENN" evidence="3">
    <location>
        <begin position="364"/>
        <end position="455"/>
    </location>
</feature>
<feature type="region of interest" description="Disordered" evidence="4">
    <location>
        <begin position="1"/>
        <end position="59"/>
    </location>
</feature>
<feature type="modified residue" description="N-acetylvaline" evidence="1">
    <location>
        <position position="2"/>
    </location>
</feature>
<feature type="modified residue" description="Omega-N-methylarginine" evidence="1">
    <location>
        <position position="41"/>
    </location>
</feature>
<feature type="splice variant" id="VSP_030494" description="In isoform 2." evidence="5">
    <location>
        <begin position="392"/>
        <end position="455"/>
    </location>
</feature>